<organism>
    <name type="scientific">Saccharomyces cerevisiae (strain ATCC 204508 / S288c)</name>
    <name type="common">Baker's yeast</name>
    <dbReference type="NCBI Taxonomy" id="559292"/>
    <lineage>
        <taxon>Eukaryota</taxon>
        <taxon>Fungi</taxon>
        <taxon>Dikarya</taxon>
        <taxon>Ascomycota</taxon>
        <taxon>Saccharomycotina</taxon>
        <taxon>Saccharomycetes</taxon>
        <taxon>Saccharomycetales</taxon>
        <taxon>Saccharomycetaceae</taxon>
        <taxon>Saccharomyces</taxon>
    </lineage>
</organism>
<reference key="1">
    <citation type="journal article" date="1994" name="EMBO J.">
        <title>Complete DNA sequence of yeast chromosome II.</title>
        <authorList>
            <person name="Feldmann H."/>
            <person name="Aigle M."/>
            <person name="Aljinovic G."/>
            <person name="Andre B."/>
            <person name="Baclet M.C."/>
            <person name="Barthe C."/>
            <person name="Baur A."/>
            <person name="Becam A.-M."/>
            <person name="Biteau N."/>
            <person name="Boles E."/>
            <person name="Brandt T."/>
            <person name="Brendel M."/>
            <person name="Brueckner M."/>
            <person name="Bussereau F."/>
            <person name="Christiansen C."/>
            <person name="Contreras R."/>
            <person name="Crouzet M."/>
            <person name="Cziepluch C."/>
            <person name="Demolis N."/>
            <person name="Delaveau T."/>
            <person name="Doignon F."/>
            <person name="Domdey H."/>
            <person name="Duesterhus S."/>
            <person name="Dubois E."/>
            <person name="Dujon B."/>
            <person name="El Bakkoury M."/>
            <person name="Entian K.-D."/>
            <person name="Feuermann M."/>
            <person name="Fiers W."/>
            <person name="Fobo G.M."/>
            <person name="Fritz C."/>
            <person name="Gassenhuber J."/>
            <person name="Glansdorff N."/>
            <person name="Goffeau A."/>
            <person name="Grivell L.A."/>
            <person name="de Haan M."/>
            <person name="Hein C."/>
            <person name="Herbert C.J."/>
            <person name="Hollenberg C.P."/>
            <person name="Holmstroem K."/>
            <person name="Jacq C."/>
            <person name="Jacquet M."/>
            <person name="Jauniaux J.-C."/>
            <person name="Jonniaux J.-L."/>
            <person name="Kallesoee T."/>
            <person name="Kiesau P."/>
            <person name="Kirchrath L."/>
            <person name="Koetter P."/>
            <person name="Korol S."/>
            <person name="Liebl S."/>
            <person name="Logghe M."/>
            <person name="Lohan A.J.E."/>
            <person name="Louis E.J."/>
            <person name="Li Z.Y."/>
            <person name="Maat M.J."/>
            <person name="Mallet L."/>
            <person name="Mannhaupt G."/>
            <person name="Messenguy F."/>
            <person name="Miosga T."/>
            <person name="Molemans F."/>
            <person name="Mueller S."/>
            <person name="Nasr F."/>
            <person name="Obermaier B."/>
            <person name="Perea J."/>
            <person name="Pierard A."/>
            <person name="Piravandi E."/>
            <person name="Pohl F.M."/>
            <person name="Pohl T.M."/>
            <person name="Potier S."/>
            <person name="Proft M."/>
            <person name="Purnelle B."/>
            <person name="Ramezani Rad M."/>
            <person name="Rieger M."/>
            <person name="Rose M."/>
            <person name="Schaaff-Gerstenschlaeger I."/>
            <person name="Scherens B."/>
            <person name="Schwarzlose C."/>
            <person name="Skala J."/>
            <person name="Slonimski P.P."/>
            <person name="Smits P.H.M."/>
            <person name="Souciet J.-L."/>
            <person name="Steensma H.Y."/>
            <person name="Stucka R."/>
            <person name="Urrestarazu L.A."/>
            <person name="van der Aart Q.J.M."/>
            <person name="Van Dyck L."/>
            <person name="Vassarotti A."/>
            <person name="Vetter I."/>
            <person name="Vierendeels F."/>
            <person name="Vissers S."/>
            <person name="Wagner G."/>
            <person name="de Wergifosse P."/>
            <person name="Wolfe K.H."/>
            <person name="Zagulski M."/>
            <person name="Zimmermann F.K."/>
            <person name="Mewes H.-W."/>
            <person name="Kleine K."/>
        </authorList>
    </citation>
    <scope>NUCLEOTIDE SEQUENCE [LARGE SCALE GENOMIC DNA]</scope>
    <source>
        <strain>ATCC 204508 / S288c</strain>
    </source>
</reference>
<reference key="2">
    <citation type="journal article" date="2014" name="G3 (Bethesda)">
        <title>The reference genome sequence of Saccharomyces cerevisiae: Then and now.</title>
        <authorList>
            <person name="Engel S.R."/>
            <person name="Dietrich F.S."/>
            <person name="Fisk D.G."/>
            <person name="Binkley G."/>
            <person name="Balakrishnan R."/>
            <person name="Costanzo M.C."/>
            <person name="Dwight S.S."/>
            <person name="Hitz B.C."/>
            <person name="Karra K."/>
            <person name="Nash R.S."/>
            <person name="Weng S."/>
            <person name="Wong E.D."/>
            <person name="Lloyd P."/>
            <person name="Skrzypek M.S."/>
            <person name="Miyasato S.R."/>
            <person name="Simison M."/>
            <person name="Cherry J.M."/>
        </authorList>
    </citation>
    <scope>GENOME REANNOTATION</scope>
    <source>
        <strain>ATCC 204508 / S288c</strain>
    </source>
</reference>
<reference key="3">
    <citation type="journal article" date="1998" name="Genome Res.">
        <title>Transposable elements and genome organization: a comprehensive survey of retrotransposons revealed by the complete Saccharomyces cerevisiae genome sequence.</title>
        <authorList>
            <person name="Kim J.M."/>
            <person name="Vanguri S."/>
            <person name="Boeke J.D."/>
            <person name="Gabriel A."/>
            <person name="Voytas D.F."/>
        </authorList>
    </citation>
    <scope>NOMENCLATURE</scope>
</reference>
<reference key="4">
    <citation type="journal article" date="2002" name="Mol. Cell. Biol.">
        <title>Differential effects of chromatin and Gcn4 on the 50-fold range of expression among individual yeast Ty1 retrotransposons.</title>
        <authorList>
            <person name="Morillon A."/>
            <person name="Benard L."/>
            <person name="Springer M."/>
            <person name="Lesage P."/>
        </authorList>
    </citation>
    <scope>INDUCTION</scope>
</reference>
<reference key="5">
    <citation type="journal article" date="2005" name="Cytogenet. Genome Res.">
        <title>Happy together: the life and times of Ty retrotransposons and their hosts.</title>
        <authorList>
            <person name="Lesage P."/>
            <person name="Todeschini A.L."/>
        </authorList>
    </citation>
    <scope>REVIEW</scope>
</reference>
<comment type="function">
    <text evidence="1">Capsid protein (CA) is the structural component of the virus-like particle (VLP), forming the shell that encapsulates the retrotransposons dimeric RNA genome. The particles are assembled from trimer-clustered units and there are holes in the capsid shells that allow for the diffusion of macromolecules. CA also has nucleocapsid-like chaperone activity, promoting primer tRNA(i)-Met annealing to the multipartite primer-binding site (PBS), dimerization of Ty1 RNA and initiation of reverse transcription (By similarity).</text>
</comment>
<comment type="subunit">
    <text evidence="1">Homotrimer.</text>
</comment>
<comment type="subcellular location">
    <subcellularLocation>
        <location evidence="1">Cytoplasm</location>
    </subcellularLocation>
</comment>
<comment type="alternative products">
    <event type="ribosomal frameshifting"/>
    <isoform>
        <id>Q12217-1</id>
        <name>Transposon Ty1-BR Gag polyprotein</name>
        <sequence type="displayed"/>
    </isoform>
    <isoform>
        <id>Q12193-1</id>
        <name>Transposon Ty1-BR Gag-Pol polyprotein</name>
        <sequence type="external"/>
    </isoform>
    <text evidence="1">The Gag-Pol polyprotein is generated by a +1 ribosomal frameshift. The ratio of Gag:Gag-Pol varies between 20:1 and 5:1 (By similarity).</text>
</comment>
<comment type="induction">
    <text evidence="4">Ty1-BR is a weakly expressed element. Induced under amino acid starvation conditions by GCN4.</text>
</comment>
<comment type="domain">
    <text evidence="1">The C-terminal RNA-binding region of CA is sufficient for all its nucleocapsid-like chaperone activities.</text>
</comment>
<comment type="miscellaneous">
    <text>Retrotransposons are mobile genetic entities that are able to replicate via an RNA intermediate and a reverse transcription step. In contrast to retroviruses, retrotransposons are non-infectious, lack an envelope and remain intracellular. Ty1 retrotransposons belong to the copia elements (pseudoviridae).</text>
</comment>
<comment type="miscellaneous">
    <molecule>Isoform Transposon Ty1-BR Gag polyprotein</molecule>
    <text>Produced by conventional translation.</text>
</comment>
<name>YB12A_YEAST</name>
<accession>Q12217</accession>
<accession>D6VQ14</accession>
<evidence type="ECO:0000250" key="1"/>
<evidence type="ECO:0000250" key="2">
    <source>
        <dbReference type="UniProtKB" id="Q12441"/>
    </source>
</evidence>
<evidence type="ECO:0000256" key="3">
    <source>
        <dbReference type="SAM" id="MobiDB-lite"/>
    </source>
</evidence>
<evidence type="ECO:0000269" key="4">
    <source>
    </source>
</evidence>
<protein>
    <recommendedName>
        <fullName>Transposon Ty1-BR Gag polyprotein</fullName>
    </recommendedName>
    <alternativeName>
        <fullName>Gag-p49</fullName>
    </alternativeName>
    <alternativeName>
        <fullName>Transposon Ty1 protein A</fullName>
        <shortName>TY1A</shortName>
        <shortName>TYA</shortName>
    </alternativeName>
    <alternativeName>
        <fullName>p58</fullName>
    </alternativeName>
    <component>
        <recommendedName>
            <fullName>Capsid protein</fullName>
            <shortName>CA</shortName>
        </recommendedName>
        <alternativeName>
            <fullName>Gag-p45</fullName>
        </alternativeName>
        <alternativeName>
            <fullName>p54</fullName>
        </alternativeName>
    </component>
    <component>
        <recommendedName>
            <fullName>Gag-p4</fullName>
        </recommendedName>
    </component>
</protein>
<gene>
    <name type="primary">TY1A-BR</name>
    <name type="synonym">YBRWTy1-2 GAG</name>
    <name type="ordered locus">YBR012W-A</name>
    <name type="ORF">YBR0206</name>
</gene>
<feature type="chain" id="PRO_0000278998" description="Transposon Ty1-BR Gag polyprotein">
    <location>
        <begin position="1"/>
        <end position="440"/>
    </location>
</feature>
<feature type="chain" id="PRO_0000278999" description="Capsid protein" evidence="1">
    <location>
        <begin position="1"/>
        <end position="401"/>
    </location>
</feature>
<feature type="peptide" id="PRO_0000279000" description="Gag-p4" evidence="1">
    <location>
        <begin position="402"/>
        <end position="440"/>
    </location>
</feature>
<feature type="region of interest" description="Disordered" evidence="3">
    <location>
        <begin position="1"/>
        <end position="93"/>
    </location>
</feature>
<feature type="region of interest" description="Disordered" evidence="3">
    <location>
        <begin position="126"/>
        <end position="173"/>
    </location>
</feature>
<feature type="region of interest" description="RNA-binding" evidence="1">
    <location>
        <begin position="299"/>
        <end position="401"/>
    </location>
</feature>
<feature type="region of interest" description="Disordered" evidence="3">
    <location>
        <begin position="352"/>
        <end position="440"/>
    </location>
</feature>
<feature type="compositionally biased region" description="Polar residues" evidence="3">
    <location>
        <begin position="1"/>
        <end position="10"/>
    </location>
</feature>
<feature type="compositionally biased region" description="Polar residues" evidence="3">
    <location>
        <begin position="48"/>
        <end position="60"/>
    </location>
</feature>
<feature type="compositionally biased region" description="Polar residues" evidence="3">
    <location>
        <begin position="127"/>
        <end position="152"/>
    </location>
</feature>
<feature type="compositionally biased region" description="Low complexity" evidence="3">
    <location>
        <begin position="153"/>
        <end position="165"/>
    </location>
</feature>
<feature type="compositionally biased region" description="Low complexity" evidence="3">
    <location>
        <begin position="402"/>
        <end position="418"/>
    </location>
</feature>
<feature type="compositionally biased region" description="Polar residues" evidence="3">
    <location>
        <begin position="419"/>
        <end position="428"/>
    </location>
</feature>
<feature type="compositionally biased region" description="Basic and acidic residues" evidence="3">
    <location>
        <begin position="429"/>
        <end position="440"/>
    </location>
</feature>
<feature type="site" description="Cleavage; by Ty1 protease" evidence="1">
    <location>
        <begin position="401"/>
        <end position="402"/>
    </location>
</feature>
<feature type="modified residue" description="Phosphoserine" evidence="2">
    <location>
        <position position="416"/>
    </location>
</feature>
<dbReference type="EMBL" id="Z35881">
    <property type="protein sequence ID" value="CAA84951.1"/>
    <property type="molecule type" value="Genomic_DNA"/>
</dbReference>
<dbReference type="EMBL" id="Z35882">
    <property type="protein sequence ID" value="CAA84953.1"/>
    <property type="molecule type" value="Genomic_DNA"/>
</dbReference>
<dbReference type="EMBL" id="BK006936">
    <property type="protein sequence ID" value="DAA07134.1"/>
    <property type="molecule type" value="Genomic_DNA"/>
</dbReference>
<dbReference type="PIR" id="S45866">
    <property type="entry name" value="S45866"/>
</dbReference>
<dbReference type="RefSeq" id="NP_009568.1">
    <molecule id="Q12217-1"/>
    <property type="nucleotide sequence ID" value="NM_001180055.1"/>
</dbReference>
<dbReference type="SMR" id="Q12217"/>
<dbReference type="BioGRID" id="32713">
    <property type="interactions" value="4"/>
</dbReference>
<dbReference type="FunCoup" id="Q12217">
    <property type="interactions" value="40"/>
</dbReference>
<dbReference type="GlyGen" id="Q12217">
    <property type="glycosylation" value="2 sites"/>
</dbReference>
<dbReference type="iPTMnet" id="Q12217"/>
<dbReference type="PaxDb" id="4932-YBR012W-A"/>
<dbReference type="PeptideAtlas" id="Q12217"/>
<dbReference type="GeneID" id="852298"/>
<dbReference type="KEGG" id="sce:YBR012W-A"/>
<dbReference type="AGR" id="SGD:S000002154"/>
<dbReference type="SGD" id="S000002154">
    <property type="gene designation" value="YBR012W-A"/>
</dbReference>
<dbReference type="VEuPathDB" id="FungiDB:YBR012W-A"/>
<dbReference type="eggNOG" id="KOG0017">
    <property type="taxonomic scope" value="Eukaryota"/>
</dbReference>
<dbReference type="HOGENOM" id="CLU_045291_1_0_1"/>
<dbReference type="InParanoid" id="Q12217"/>
<dbReference type="OrthoDB" id="4046078at2759"/>
<dbReference type="Proteomes" id="UP000002311">
    <property type="component" value="Chromosome II"/>
</dbReference>
<dbReference type="RNAct" id="Q12217">
    <property type="molecule type" value="protein"/>
</dbReference>
<dbReference type="GO" id="GO:0005737">
    <property type="term" value="C:cytoplasm"/>
    <property type="evidence" value="ECO:0007669"/>
    <property type="project" value="UniProtKB-SubCell"/>
</dbReference>
<dbReference type="GO" id="GO:0003723">
    <property type="term" value="F:RNA binding"/>
    <property type="evidence" value="ECO:0007669"/>
    <property type="project" value="UniProtKB-KW"/>
</dbReference>
<dbReference type="GO" id="GO:0075523">
    <property type="term" value="P:viral translational frameshifting"/>
    <property type="evidence" value="ECO:0007669"/>
    <property type="project" value="UniProtKB-KW"/>
</dbReference>
<dbReference type="InterPro" id="IPR015820">
    <property type="entry name" value="TYA"/>
</dbReference>
<dbReference type="Pfam" id="PF01021">
    <property type="entry name" value="TYA"/>
    <property type="match status" value="1"/>
</dbReference>
<sequence>MESQQLSNYPHISHGSACASVTSKEVHTNQDPLDVSASKIQEYDKASTKANSQQTTTPASSAVPENPHHASPQPASVPPPQNGPYPQQCMMTQNQANPSGWSFYGHPSMIPYTPYQMSPMYFPPGPQSQFPQYPSSVGTPLSTPSPESGNTFTDSSSADSDMTSTKKYVRPPPMLTSPNDFPNWVKTYIKFLQNSNLGGIIPTVNGKPVRPITDDELTFLYNAFQIFAPSQFLPTWVKDILSVDYTDIMKILSKSIEKMQSDTQEANDIVTLANLQYNGSTPADAFETKVTNIIDRLNNNGIHINNKVACQLIMRGLSGEYKFLRYTRHRHLNMTVAELFLDIHAIYEEQQGSRNSKPNYRRNPSDEKNDSRSYTNTTKPKVIARNPQKTNNSKSKTARAHNVSTSNNSPSTDNDSISKSTTEPIQLNNKHDLHLRPETY</sequence>
<proteinExistence type="evidence at transcript level"/>
<keyword id="KW-0963">Cytoplasm</keyword>
<keyword id="KW-0597">Phosphoprotein</keyword>
<keyword id="KW-1185">Reference proteome</keyword>
<keyword id="KW-0688">Ribosomal frameshifting</keyword>
<keyword id="KW-0694">RNA-binding</keyword>
<keyword id="KW-0814">Transposable element</keyword>